<dbReference type="EMBL" id="CR456576">
    <property type="protein sequence ID" value="CAG30462.1"/>
    <property type="molecule type" value="mRNA"/>
</dbReference>
<dbReference type="EMBL" id="AK124370">
    <property type="protein sequence ID" value="BAC85842.1"/>
    <property type="status" value="ALT_SEQ"/>
    <property type="molecule type" value="mRNA"/>
</dbReference>
<dbReference type="EMBL" id="Z83844">
    <property type="status" value="NOT_ANNOTATED_CDS"/>
    <property type="molecule type" value="Genomic_DNA"/>
</dbReference>
<dbReference type="EMBL" id="BC008282">
    <property type="protein sequence ID" value="AAH08282.1"/>
    <property type="status" value="ALT_INIT"/>
    <property type="molecule type" value="mRNA"/>
</dbReference>
<dbReference type="EMBL" id="AL157480">
    <property type="protein sequence ID" value="CAB75671.2"/>
    <property type="molecule type" value="mRNA"/>
</dbReference>
<dbReference type="CCDS" id="CCDS13952.2">
    <molecule id="Q9Y3L3-1"/>
</dbReference>
<dbReference type="PIR" id="T46916">
    <property type="entry name" value="T46916"/>
</dbReference>
<dbReference type="RefSeq" id="NP_061830.3">
    <molecule id="Q9Y3L3-1"/>
    <property type="nucleotide sequence ID" value="NM_018957.3"/>
</dbReference>
<dbReference type="PDB" id="4J9D">
    <property type="method" value="X-ray"/>
    <property type="resolution" value="1.50 A"/>
    <property type="chains" value="B/D/F=616-625"/>
</dbReference>
<dbReference type="PDB" id="4J9F">
    <property type="method" value="X-ray"/>
    <property type="resolution" value="1.09 A"/>
    <property type="chains" value="B/D/F=616-625"/>
</dbReference>
<dbReference type="PDBsum" id="4J9D"/>
<dbReference type="PDBsum" id="4J9F"/>
<dbReference type="SMR" id="Q9Y3L3"/>
<dbReference type="BioGRID" id="117149">
    <property type="interactions" value="45"/>
</dbReference>
<dbReference type="FunCoup" id="Q9Y3L3">
    <property type="interactions" value="667"/>
</dbReference>
<dbReference type="IntAct" id="Q9Y3L3">
    <property type="interactions" value="26"/>
</dbReference>
<dbReference type="MINT" id="Q9Y3L3"/>
<dbReference type="STRING" id="9606.ENSP00000497104"/>
<dbReference type="GlyCosmos" id="Q9Y3L3">
    <property type="glycosylation" value="1 site, 1 glycan"/>
</dbReference>
<dbReference type="GlyGen" id="Q9Y3L3">
    <property type="glycosylation" value="4 sites, 1 O-linked glycan (1 site)"/>
</dbReference>
<dbReference type="iPTMnet" id="Q9Y3L3"/>
<dbReference type="PhosphoSitePlus" id="Q9Y3L3"/>
<dbReference type="BioMuta" id="SH3BP1"/>
<dbReference type="DMDM" id="51338841"/>
<dbReference type="CPTAC" id="CPTAC-1004"/>
<dbReference type="jPOST" id="Q9Y3L3"/>
<dbReference type="MassIVE" id="Q9Y3L3"/>
<dbReference type="PaxDb" id="9606-ENSP00000350018"/>
<dbReference type="PeptideAtlas" id="Q9Y3L3"/>
<dbReference type="ProteomicsDB" id="86041">
    <molecule id="Q9Y3L3-1"/>
</dbReference>
<dbReference type="ProteomicsDB" id="86042">
    <molecule id="Q9Y3L3-2"/>
</dbReference>
<dbReference type="Pumba" id="Q9Y3L3"/>
<dbReference type="Antibodypedia" id="214">
    <property type="antibodies" value="229 antibodies from 32 providers"/>
</dbReference>
<dbReference type="DNASU" id="23616"/>
<dbReference type="Ensembl" id="ENST00000417536.5">
    <molecule id="Q9Y3L3-2"/>
    <property type="protein sequence ID" value="ENSP00000411979.1"/>
    <property type="gene ID" value="ENSG00000100092.24"/>
</dbReference>
<dbReference type="Ensembl" id="ENST00000649765.2">
    <molecule id="Q9Y3L3-1"/>
    <property type="protein sequence ID" value="ENSP00000497104.1"/>
    <property type="gene ID" value="ENSG00000100092.24"/>
</dbReference>
<dbReference type="GeneID" id="23616"/>
<dbReference type="KEGG" id="hsa:23616"/>
<dbReference type="MANE-Select" id="ENST00000649765.2">
    <property type="protein sequence ID" value="ENSP00000497104.1"/>
    <property type="RefSeq nucleotide sequence ID" value="NM_018957.6"/>
    <property type="RefSeq protein sequence ID" value="NP_061830.3"/>
</dbReference>
<dbReference type="UCSC" id="uc003atg.2">
    <molecule id="Q9Y3L3-1"/>
    <property type="organism name" value="human"/>
</dbReference>
<dbReference type="AGR" id="HGNC:10824"/>
<dbReference type="CTD" id="23616"/>
<dbReference type="DisGeNET" id="23616"/>
<dbReference type="GeneCards" id="SH3BP1"/>
<dbReference type="HGNC" id="HGNC:10824">
    <property type="gene designation" value="SH3BP1"/>
</dbReference>
<dbReference type="HPA" id="ENSG00000100092">
    <property type="expression patterns" value="Tissue enhanced (esophagus)"/>
</dbReference>
<dbReference type="MIM" id="617368">
    <property type="type" value="gene"/>
</dbReference>
<dbReference type="neXtProt" id="NX_Q9Y3L3"/>
<dbReference type="OpenTargets" id="ENSG00000100092"/>
<dbReference type="PharmGKB" id="PA35732"/>
<dbReference type="VEuPathDB" id="HostDB:ENSG00000100092"/>
<dbReference type="eggNOG" id="KOG4270">
    <property type="taxonomic scope" value="Eukaryota"/>
</dbReference>
<dbReference type="GeneTree" id="ENSGT00940000158369"/>
<dbReference type="HOGENOM" id="CLU_013806_2_0_1"/>
<dbReference type="InParanoid" id="Q9Y3L3"/>
<dbReference type="OMA" id="WDYFFEG"/>
<dbReference type="OrthoDB" id="19923at2759"/>
<dbReference type="PAN-GO" id="Q9Y3L3">
    <property type="GO annotations" value="6 GO annotations based on evolutionary models"/>
</dbReference>
<dbReference type="PhylomeDB" id="Q9Y3L3"/>
<dbReference type="TreeFam" id="TF316514"/>
<dbReference type="PathwayCommons" id="Q9Y3L3"/>
<dbReference type="Reactome" id="R-HSA-9013149">
    <property type="pathway name" value="RAC1 GTPase cycle"/>
</dbReference>
<dbReference type="SignaLink" id="Q9Y3L3"/>
<dbReference type="SIGNOR" id="Q9Y3L3"/>
<dbReference type="BioGRID-ORCS" id="23616">
    <property type="hits" value="23 hits in 1151 CRISPR screens"/>
</dbReference>
<dbReference type="CD-CODE" id="FB4E32DD">
    <property type="entry name" value="Presynaptic clusters and postsynaptic densities"/>
</dbReference>
<dbReference type="ChiTaRS" id="SH3BP1">
    <property type="organism name" value="human"/>
</dbReference>
<dbReference type="EvolutionaryTrace" id="Q9Y3L3"/>
<dbReference type="GeneWiki" id="SH3BP1"/>
<dbReference type="GenomeRNAi" id="23616"/>
<dbReference type="Pharos" id="Q9Y3L3">
    <property type="development level" value="Tbio"/>
</dbReference>
<dbReference type="PRO" id="PR:Q9Y3L3"/>
<dbReference type="Proteomes" id="UP000005640">
    <property type="component" value="Chromosome 22"/>
</dbReference>
<dbReference type="RNAct" id="Q9Y3L3">
    <property type="molecule type" value="protein"/>
</dbReference>
<dbReference type="Bgee" id="ENSG00000100092">
    <property type="expression patterns" value="Expressed in granulocyte and 101 other cell types or tissues"/>
</dbReference>
<dbReference type="ExpressionAtlas" id="Q9Y3L3">
    <property type="expression patterns" value="baseline and differential"/>
</dbReference>
<dbReference type="GO" id="GO:0005912">
    <property type="term" value="C:adherens junction"/>
    <property type="evidence" value="ECO:0000314"/>
    <property type="project" value="UniProtKB"/>
</dbReference>
<dbReference type="GO" id="GO:0005923">
    <property type="term" value="C:bicellular tight junction"/>
    <property type="evidence" value="ECO:0000314"/>
    <property type="project" value="UniProtKB"/>
</dbReference>
<dbReference type="GO" id="GO:0031252">
    <property type="term" value="C:cell leading edge"/>
    <property type="evidence" value="ECO:0000314"/>
    <property type="project" value="UniProtKB"/>
</dbReference>
<dbReference type="GO" id="GO:0005829">
    <property type="term" value="C:cytosol"/>
    <property type="evidence" value="ECO:0000314"/>
    <property type="project" value="UniProtKB"/>
</dbReference>
<dbReference type="GO" id="GO:0030027">
    <property type="term" value="C:lamellipodium"/>
    <property type="evidence" value="ECO:0000314"/>
    <property type="project" value="UniProtKB"/>
</dbReference>
<dbReference type="GO" id="GO:0005634">
    <property type="term" value="C:nucleus"/>
    <property type="evidence" value="ECO:0000314"/>
    <property type="project" value="UniProtKB"/>
</dbReference>
<dbReference type="GO" id="GO:0001891">
    <property type="term" value="C:phagocytic cup"/>
    <property type="evidence" value="ECO:0000314"/>
    <property type="project" value="UniProtKB"/>
</dbReference>
<dbReference type="GO" id="GO:0005886">
    <property type="term" value="C:plasma membrane"/>
    <property type="evidence" value="ECO:0000318"/>
    <property type="project" value="GO_Central"/>
</dbReference>
<dbReference type="GO" id="GO:0005096">
    <property type="term" value="F:GTPase activator activity"/>
    <property type="evidence" value="ECO:0000315"/>
    <property type="project" value="UniProtKB"/>
</dbReference>
<dbReference type="GO" id="GO:0030215">
    <property type="term" value="F:semaphorin receptor binding"/>
    <property type="evidence" value="ECO:0000353"/>
    <property type="project" value="UniProtKB"/>
</dbReference>
<dbReference type="GO" id="GO:0017124">
    <property type="term" value="F:SH3 domain binding"/>
    <property type="evidence" value="ECO:0007669"/>
    <property type="project" value="UniProtKB-KW"/>
</dbReference>
<dbReference type="GO" id="GO:0007015">
    <property type="term" value="P:actin filament organization"/>
    <property type="evidence" value="ECO:0000315"/>
    <property type="project" value="UniProtKB"/>
</dbReference>
<dbReference type="GO" id="GO:0034329">
    <property type="term" value="P:cell junction assembly"/>
    <property type="evidence" value="ECO:0000315"/>
    <property type="project" value="UniProtKB"/>
</dbReference>
<dbReference type="GO" id="GO:0016477">
    <property type="term" value="P:cell migration"/>
    <property type="evidence" value="ECO:0000315"/>
    <property type="project" value="UniProtKB"/>
</dbReference>
<dbReference type="GO" id="GO:0045198">
    <property type="term" value="P:establishment of epithelial cell apical/basal polarity"/>
    <property type="evidence" value="ECO:0000315"/>
    <property type="project" value="UniProtKB"/>
</dbReference>
<dbReference type="GO" id="GO:0051058">
    <property type="term" value="P:negative regulation of small GTPase mediated signal transduction"/>
    <property type="evidence" value="ECO:0000315"/>
    <property type="project" value="UniProtKB"/>
</dbReference>
<dbReference type="GO" id="GO:0006911">
    <property type="term" value="P:phagocytosis, engulfment"/>
    <property type="evidence" value="ECO:0000315"/>
    <property type="project" value="UniProtKB"/>
</dbReference>
<dbReference type="GO" id="GO:0043547">
    <property type="term" value="P:positive regulation of GTPase activity"/>
    <property type="evidence" value="ECO:0000315"/>
    <property type="project" value="UniProtKB"/>
</dbReference>
<dbReference type="GO" id="GO:0032956">
    <property type="term" value="P:regulation of actin cytoskeleton organization"/>
    <property type="evidence" value="ECO:0000315"/>
    <property type="project" value="UniProtKB"/>
</dbReference>
<dbReference type="GO" id="GO:0030834">
    <property type="term" value="P:regulation of actin filament depolymerization"/>
    <property type="evidence" value="ECO:0000315"/>
    <property type="project" value="UniProtKB"/>
</dbReference>
<dbReference type="GO" id="GO:0043535">
    <property type="term" value="P:regulation of blood vessel endothelial cell migration"/>
    <property type="evidence" value="ECO:0000315"/>
    <property type="project" value="UniProtKB"/>
</dbReference>
<dbReference type="GO" id="GO:0035020">
    <property type="term" value="P:regulation of Rac protein signal transduction"/>
    <property type="evidence" value="ECO:0000318"/>
    <property type="project" value="GO_Central"/>
</dbReference>
<dbReference type="GO" id="GO:0051056">
    <property type="term" value="P:regulation of small GTPase mediated signal transduction"/>
    <property type="evidence" value="ECO:0000304"/>
    <property type="project" value="Reactome"/>
</dbReference>
<dbReference type="GO" id="GO:0097178">
    <property type="term" value="P:ruffle assembly"/>
    <property type="evidence" value="ECO:0007669"/>
    <property type="project" value="Ensembl"/>
</dbReference>
<dbReference type="GO" id="GO:0071526">
    <property type="term" value="P:semaphorin-plexin signaling pathway"/>
    <property type="evidence" value="ECO:0000315"/>
    <property type="project" value="UniProtKB"/>
</dbReference>
<dbReference type="CDD" id="cd07620">
    <property type="entry name" value="BAR_SH3BP1"/>
    <property type="match status" value="1"/>
</dbReference>
<dbReference type="FunFam" id="1.10.555.10:FF:000001">
    <property type="entry name" value="Rho GTPase activating protein 44"/>
    <property type="match status" value="1"/>
</dbReference>
<dbReference type="FunFam" id="1.20.1270.60:FF:000053">
    <property type="entry name" value="SH3 domain-binding protein 1"/>
    <property type="match status" value="1"/>
</dbReference>
<dbReference type="Gene3D" id="1.20.1270.60">
    <property type="entry name" value="Arfaptin homology (AH) domain/BAR domain"/>
    <property type="match status" value="1"/>
</dbReference>
<dbReference type="Gene3D" id="1.10.555.10">
    <property type="entry name" value="Rho GTPase activation protein"/>
    <property type="match status" value="1"/>
</dbReference>
<dbReference type="InterPro" id="IPR027267">
    <property type="entry name" value="AH/BAR_dom_sf"/>
</dbReference>
<dbReference type="InterPro" id="IPR004148">
    <property type="entry name" value="BAR_dom"/>
</dbReference>
<dbReference type="InterPro" id="IPR047165">
    <property type="entry name" value="RHG17/44/SH3BP1-like"/>
</dbReference>
<dbReference type="InterPro" id="IPR008936">
    <property type="entry name" value="Rho_GTPase_activation_prot"/>
</dbReference>
<dbReference type="InterPro" id="IPR000198">
    <property type="entry name" value="RhoGAP_dom"/>
</dbReference>
<dbReference type="PANTHER" id="PTHR14130">
    <property type="entry name" value="3BP-1 RELATED RHOGAP"/>
    <property type="match status" value="1"/>
</dbReference>
<dbReference type="PANTHER" id="PTHR14130:SF12">
    <property type="entry name" value="BARGIN-RELATED"/>
    <property type="match status" value="1"/>
</dbReference>
<dbReference type="Pfam" id="PF03114">
    <property type="entry name" value="BAR"/>
    <property type="match status" value="1"/>
</dbReference>
<dbReference type="Pfam" id="PF00620">
    <property type="entry name" value="RhoGAP"/>
    <property type="match status" value="1"/>
</dbReference>
<dbReference type="SMART" id="SM00721">
    <property type="entry name" value="BAR"/>
    <property type="match status" value="1"/>
</dbReference>
<dbReference type="SMART" id="SM00324">
    <property type="entry name" value="RhoGAP"/>
    <property type="match status" value="1"/>
</dbReference>
<dbReference type="SUPFAM" id="SSF103657">
    <property type="entry name" value="BAR/IMD domain-like"/>
    <property type="match status" value="1"/>
</dbReference>
<dbReference type="SUPFAM" id="SSF48350">
    <property type="entry name" value="GTPase activation domain, GAP"/>
    <property type="match status" value="1"/>
</dbReference>
<dbReference type="PROSITE" id="PS51021">
    <property type="entry name" value="BAR"/>
    <property type="match status" value="1"/>
</dbReference>
<dbReference type="PROSITE" id="PS50238">
    <property type="entry name" value="RHOGAP"/>
    <property type="match status" value="1"/>
</dbReference>
<accession>Q9Y3L3</accession>
<accession>Q5R3N0</accession>
<accession>Q6IBZ2</accession>
<accession>Q6ZVL9</accession>
<accession>Q96HQ5</accession>
<accession>Q9NSQ9</accession>
<proteinExistence type="evidence at protein level"/>
<organism>
    <name type="scientific">Homo sapiens</name>
    <name type="common">Human</name>
    <dbReference type="NCBI Taxonomy" id="9606"/>
    <lineage>
        <taxon>Eukaryota</taxon>
        <taxon>Metazoa</taxon>
        <taxon>Chordata</taxon>
        <taxon>Craniata</taxon>
        <taxon>Vertebrata</taxon>
        <taxon>Euteleostomi</taxon>
        <taxon>Mammalia</taxon>
        <taxon>Eutheria</taxon>
        <taxon>Euarchontoglires</taxon>
        <taxon>Primates</taxon>
        <taxon>Haplorrhini</taxon>
        <taxon>Catarrhini</taxon>
        <taxon>Hominidae</taxon>
        <taxon>Homo</taxon>
    </lineage>
</organism>
<name>3BP1_HUMAN</name>
<protein>
    <recommendedName>
        <fullName evidence="13">SH3 domain-binding protein 1</fullName>
    </recommendedName>
</protein>
<comment type="function">
    <text evidence="6 7 8 9">GTPase activating protein (GAP) which specifically converts GTP-bound Rho-type GTPases including RAC1 and CDC42 in their inactive GDP-bound form. By specifically inactivating RAC1 at the leading edge of migrating cells, it regulates the spatiotemporal organization of cell protrusions which is important for proper cell migration (PubMed:21658605). Also negatively regulates CDC42 in the process of actin remodeling and the formation of epithelial cell junctions (PubMed:22891260). Through its GAP activity toward RAC1 and/or CDC42 plays a specific role in phagocytosis of large particles. Specifically recruited by a PI3 kinase/PI3K-dependent mechanism to sites of large particles engagement, inactivates RAC1 and/or CDC42 allowing the reorganization of the underlying actin cytoskeleton required for engulfment (PubMed:26465210). It also plays a role in angiogenesis and the process of repulsive guidance as part of a semaphorin-plexin signaling pathway. Following the binding of PLXND1 to extracellular SEMA3E it dissociates from PLXND1 and inactivates RAC1, inducing the intracellular reorganization of the actin cytoskeleton and the collapse of cells (PubMed:24841563).</text>
</comment>
<comment type="subunit">
    <text evidence="2 6 7 8">Interacts with RAC1 (By similarity). Interacts with the exocyst via EXOC4 and EXOC8; required for the localization of both SH3BP1 and the exocyst to the leading edge of migrating cells (PubMed:21658605). Interacts with CD2AP and CGNL1; probably part of a complex at cell junctions (PubMed:22891260). Interacts with CAPZA1; recruits CAPZA1 to forming cell junctions (PubMed:22891260). May interact with AFDN (PubMed:22891260). Interacts with PLXND1; they dissociate upon SEMA3E binding to PLXND1 allowing SH3BP1 to transduce downstream signal through RAC1 inactivation (PubMed:24841563). Interacts with ABL1, GRB2 and SRC (via SH3 domain) (By similarity).</text>
</comment>
<comment type="interaction">
    <interactant intactId="EBI-346869">
        <id>Q9Y3L3</id>
    </interactant>
    <interactant intactId="EBI-11096309">
        <id>Q9NYB9-2</id>
        <label>ABI2</label>
    </interactant>
    <organismsDiffer>false</organismsDiffer>
    <experiments>3</experiments>
</comment>
<comment type="interaction">
    <interactant intactId="EBI-346869">
        <id>Q9Y3L3</id>
    </interactant>
    <interactant intactId="EBI-742038">
        <id>Q9P2A4</id>
        <label>ABI3</label>
    </interactant>
    <organismsDiffer>false</organismsDiffer>
    <experiments>3</experiments>
</comment>
<comment type="interaction">
    <interactant intactId="EBI-346869">
        <id>Q9Y3L3</id>
    </interactant>
    <interactant intactId="EBI-1642807">
        <id>Q68EM7</id>
        <label>ARHGAP17</label>
    </interactant>
    <organismsDiffer>false</organismsDiffer>
    <experiments>4</experiments>
</comment>
<comment type="interaction">
    <interactant intactId="EBI-346869">
        <id>Q9Y3L3</id>
    </interactant>
    <interactant intactId="EBI-10749669">
        <id>Q8IYE0</id>
        <label>CCDC146</label>
    </interactant>
    <organismsDiffer>false</organismsDiffer>
    <experiments>3</experiments>
</comment>
<comment type="interaction">
    <interactant intactId="EBI-346869">
        <id>Q9Y3L3</id>
    </interactant>
    <interactant intactId="EBI-9640259">
        <id>P02671-2</id>
        <label>FGA</label>
    </interactant>
    <organismsDiffer>false</organismsDiffer>
    <experiments>3</experiments>
</comment>
<comment type="interaction">
    <interactant intactId="EBI-346869">
        <id>Q9Y3L3</id>
    </interactant>
    <interactant intactId="EBI-710997">
        <id>P54274</id>
        <label>TERF1</label>
    </interactant>
    <organismsDiffer>false</organismsDiffer>
    <experiments>2</experiments>
</comment>
<comment type="interaction">
    <interactant intactId="EBI-346869">
        <id>Q9Y3L3</id>
    </interactant>
    <interactant intactId="EBI-739936">
        <id>Q15642</id>
        <label>TRIP10</label>
    </interactant>
    <organismsDiffer>false</organismsDiffer>
    <experiments>3</experiments>
</comment>
<comment type="interaction">
    <interactant intactId="EBI-346869">
        <id>Q9Y3L3</id>
    </interactant>
    <interactant intactId="EBI-6550597">
        <id>Q15642-2</id>
        <label>TRIP10</label>
    </interactant>
    <organismsDiffer>false</organismsDiffer>
    <experiments>3</experiments>
</comment>
<comment type="subcellular location">
    <subcellularLocation>
        <location evidence="6 8">Cell projection</location>
    </subcellularLocation>
    <subcellularLocation>
        <location evidence="7">Cell junction</location>
        <location evidence="7">Tight junction</location>
    </subcellularLocation>
    <subcellularLocation>
        <location evidence="7">Cell junction</location>
        <location evidence="7">Adherens junction</location>
    </subcellularLocation>
    <subcellularLocation>
        <location evidence="9">Cell projection</location>
        <location evidence="9">Phagocytic cup</location>
    </subcellularLocation>
    <subcellularLocation>
        <location evidence="7">Nucleus</location>
    </subcellularLocation>
    <subcellularLocation>
        <location evidence="7">Cytoplasm</location>
        <location evidence="7">Cytosol</location>
    </subcellularLocation>
    <text evidence="6 8 9">Localizes at the leading edge of migrating cells (PubMed:21658605, PubMed:24841563). Accumulation at forming phagocytic cups is PI3 kinase/PI3K-dependent and is specific for sites of large particles engagement and their phosphatidylinositol 3,4,5-triphosphate membrane content (PubMed:26465210).</text>
</comment>
<comment type="alternative products">
    <event type="alternative splicing"/>
    <event type="alternative initiation"/>
    <isoform>
        <id>Q9Y3L3-1</id>
        <name>1</name>
        <sequence type="displayed"/>
    </isoform>
    <isoform>
        <id>Q9Y3L3-2</id>
        <name>2</name>
        <sequence type="described" ref="VSP_011373 VSP_011374"/>
    </isoform>
    <isoform>
        <id>Q6ZT62-1</id>
        <name evidence="11">Long BGIN</name>
        <sequence type="external"/>
    </isoform>
    <isoform>
        <id>Q6ZT62-2</id>
        <name evidence="11">Short BGIN</name>
        <sequence type="external"/>
    </isoform>
</comment>
<comment type="domain">
    <text evidence="6 8">The BAR domain mediates interaction with the exocyst components EXOC4 and EXOC8 and is required for the function in cell migration (PubMed:21658605). It also mediates the interaction with PLXND1 (PubMed:24841563).</text>
</comment>
<comment type="sequence caution" evidence="12">
    <conflict type="erroneous initiation">
        <sequence resource="EMBL-CDS" id="AAH08282"/>
    </conflict>
    <text>Truncated N-terminus.</text>
</comment>
<comment type="sequence caution" evidence="12">
    <conflict type="erroneous initiation">
        <sequence resource="EMBL-CDS" id="BAC85842"/>
    </conflict>
    <text>Truncated N-terminus.</text>
</comment>
<comment type="sequence caution" evidence="12">
    <conflict type="erroneous termination">
        <sequence resource="EMBL-CDS" id="BAC85842"/>
    </conflict>
    <text>Truncated C-terminus.</text>
</comment>
<reference key="1">
    <citation type="journal article" date="2004" name="Genome Biol.">
        <title>A genome annotation-driven approach to cloning the human ORFeome.</title>
        <authorList>
            <person name="Collins J.E."/>
            <person name="Wright C.L."/>
            <person name="Edwards C.A."/>
            <person name="Davis M.P."/>
            <person name="Grinham J.A."/>
            <person name="Cole C.G."/>
            <person name="Goward M.E."/>
            <person name="Aguado B."/>
            <person name="Mallya M."/>
            <person name="Mokrab Y."/>
            <person name="Huckle E.J."/>
            <person name="Beare D.M."/>
            <person name="Dunham I."/>
        </authorList>
    </citation>
    <scope>NUCLEOTIDE SEQUENCE [LARGE SCALE MRNA] (ISOFORM 1)</scope>
</reference>
<reference key="2">
    <citation type="journal article" date="2004" name="Nat. Genet.">
        <title>Complete sequencing and characterization of 21,243 full-length human cDNAs.</title>
        <authorList>
            <person name="Ota T."/>
            <person name="Suzuki Y."/>
            <person name="Nishikawa T."/>
            <person name="Otsuki T."/>
            <person name="Sugiyama T."/>
            <person name="Irie R."/>
            <person name="Wakamatsu A."/>
            <person name="Hayashi K."/>
            <person name="Sato H."/>
            <person name="Nagai K."/>
            <person name="Kimura K."/>
            <person name="Makita H."/>
            <person name="Sekine M."/>
            <person name="Obayashi M."/>
            <person name="Nishi T."/>
            <person name="Shibahara T."/>
            <person name="Tanaka T."/>
            <person name="Ishii S."/>
            <person name="Yamamoto J."/>
            <person name="Saito K."/>
            <person name="Kawai Y."/>
            <person name="Isono Y."/>
            <person name="Nakamura Y."/>
            <person name="Nagahari K."/>
            <person name="Murakami K."/>
            <person name="Yasuda T."/>
            <person name="Iwayanagi T."/>
            <person name="Wagatsuma M."/>
            <person name="Shiratori A."/>
            <person name="Sudo H."/>
            <person name="Hosoiri T."/>
            <person name="Kaku Y."/>
            <person name="Kodaira H."/>
            <person name="Kondo H."/>
            <person name="Sugawara M."/>
            <person name="Takahashi M."/>
            <person name="Kanda K."/>
            <person name="Yokoi T."/>
            <person name="Furuya T."/>
            <person name="Kikkawa E."/>
            <person name="Omura Y."/>
            <person name="Abe K."/>
            <person name="Kamihara K."/>
            <person name="Katsuta N."/>
            <person name="Sato K."/>
            <person name="Tanikawa M."/>
            <person name="Yamazaki M."/>
            <person name="Ninomiya K."/>
            <person name="Ishibashi T."/>
            <person name="Yamashita H."/>
            <person name="Murakawa K."/>
            <person name="Fujimori K."/>
            <person name="Tanai H."/>
            <person name="Kimata M."/>
            <person name="Watanabe M."/>
            <person name="Hiraoka S."/>
            <person name="Chiba Y."/>
            <person name="Ishida S."/>
            <person name="Ono Y."/>
            <person name="Takiguchi S."/>
            <person name="Watanabe S."/>
            <person name="Yosida M."/>
            <person name="Hotuta T."/>
            <person name="Kusano J."/>
            <person name="Kanehori K."/>
            <person name="Takahashi-Fujii A."/>
            <person name="Hara H."/>
            <person name="Tanase T.-O."/>
            <person name="Nomura Y."/>
            <person name="Togiya S."/>
            <person name="Komai F."/>
            <person name="Hara R."/>
            <person name="Takeuchi K."/>
            <person name="Arita M."/>
            <person name="Imose N."/>
            <person name="Musashino K."/>
            <person name="Yuuki H."/>
            <person name="Oshima A."/>
            <person name="Sasaki N."/>
            <person name="Aotsuka S."/>
            <person name="Yoshikawa Y."/>
            <person name="Matsunawa H."/>
            <person name="Ichihara T."/>
            <person name="Shiohata N."/>
            <person name="Sano S."/>
            <person name="Moriya S."/>
            <person name="Momiyama H."/>
            <person name="Satoh N."/>
            <person name="Takami S."/>
            <person name="Terashima Y."/>
            <person name="Suzuki O."/>
            <person name="Nakagawa S."/>
            <person name="Senoh A."/>
            <person name="Mizoguchi H."/>
            <person name="Goto Y."/>
            <person name="Shimizu F."/>
            <person name="Wakebe H."/>
            <person name="Hishigaki H."/>
            <person name="Watanabe T."/>
            <person name="Sugiyama A."/>
            <person name="Takemoto M."/>
            <person name="Kawakami B."/>
            <person name="Yamazaki M."/>
            <person name="Watanabe K."/>
            <person name="Kumagai A."/>
            <person name="Itakura S."/>
            <person name="Fukuzumi Y."/>
            <person name="Fujimori Y."/>
            <person name="Komiyama M."/>
            <person name="Tashiro H."/>
            <person name="Tanigami A."/>
            <person name="Fujiwara T."/>
            <person name="Ono T."/>
            <person name="Yamada K."/>
            <person name="Fujii Y."/>
            <person name="Ozaki K."/>
            <person name="Hirao M."/>
            <person name="Ohmori Y."/>
            <person name="Kawabata A."/>
            <person name="Hikiji T."/>
            <person name="Kobatake N."/>
            <person name="Inagaki H."/>
            <person name="Ikema Y."/>
            <person name="Okamoto S."/>
            <person name="Okitani R."/>
            <person name="Kawakami T."/>
            <person name="Noguchi S."/>
            <person name="Itoh T."/>
            <person name="Shigeta K."/>
            <person name="Senba T."/>
            <person name="Matsumura K."/>
            <person name="Nakajima Y."/>
            <person name="Mizuno T."/>
            <person name="Morinaga M."/>
            <person name="Sasaki M."/>
            <person name="Togashi T."/>
            <person name="Oyama M."/>
            <person name="Hata H."/>
            <person name="Watanabe M."/>
            <person name="Komatsu T."/>
            <person name="Mizushima-Sugano J."/>
            <person name="Satoh T."/>
            <person name="Shirai Y."/>
            <person name="Takahashi Y."/>
            <person name="Nakagawa K."/>
            <person name="Okumura K."/>
            <person name="Nagase T."/>
            <person name="Nomura N."/>
            <person name="Kikuchi H."/>
            <person name="Masuho Y."/>
            <person name="Yamashita R."/>
            <person name="Nakai K."/>
            <person name="Yada T."/>
            <person name="Nakamura Y."/>
            <person name="Ohara O."/>
            <person name="Isogai T."/>
            <person name="Sugano S."/>
        </authorList>
    </citation>
    <scope>NUCLEOTIDE SEQUENCE [LARGE SCALE MRNA] (ISOFORM 2)</scope>
    <source>
        <tissue>Uterus</tissue>
    </source>
</reference>
<reference key="3">
    <citation type="journal article" date="1999" name="Nature">
        <title>The DNA sequence of human chromosome 22.</title>
        <authorList>
            <person name="Dunham I."/>
            <person name="Hunt A.R."/>
            <person name="Collins J.E."/>
            <person name="Bruskiewich R."/>
            <person name="Beare D.M."/>
            <person name="Clamp M."/>
            <person name="Smink L.J."/>
            <person name="Ainscough R."/>
            <person name="Almeida J.P."/>
            <person name="Babbage A.K."/>
            <person name="Bagguley C."/>
            <person name="Bailey J."/>
            <person name="Barlow K.F."/>
            <person name="Bates K.N."/>
            <person name="Beasley O.P."/>
            <person name="Bird C.P."/>
            <person name="Blakey S.E."/>
            <person name="Bridgeman A.M."/>
            <person name="Buck D."/>
            <person name="Burgess J."/>
            <person name="Burrill W.D."/>
            <person name="Burton J."/>
            <person name="Carder C."/>
            <person name="Carter N.P."/>
            <person name="Chen Y."/>
            <person name="Clark G."/>
            <person name="Clegg S.M."/>
            <person name="Cobley V.E."/>
            <person name="Cole C.G."/>
            <person name="Collier R.E."/>
            <person name="Connor R."/>
            <person name="Conroy D."/>
            <person name="Corby N.R."/>
            <person name="Coville G.J."/>
            <person name="Cox A.V."/>
            <person name="Davis J."/>
            <person name="Dawson E."/>
            <person name="Dhami P.D."/>
            <person name="Dockree C."/>
            <person name="Dodsworth S.J."/>
            <person name="Durbin R.M."/>
            <person name="Ellington A.G."/>
            <person name="Evans K.L."/>
            <person name="Fey J.M."/>
            <person name="Fleming K."/>
            <person name="French L."/>
            <person name="Garner A.A."/>
            <person name="Gilbert J.G.R."/>
            <person name="Goward M.E."/>
            <person name="Grafham D.V."/>
            <person name="Griffiths M.N.D."/>
            <person name="Hall C."/>
            <person name="Hall R.E."/>
            <person name="Hall-Tamlyn G."/>
            <person name="Heathcott R.W."/>
            <person name="Ho S."/>
            <person name="Holmes S."/>
            <person name="Hunt S.E."/>
            <person name="Jones M.C."/>
            <person name="Kershaw J."/>
            <person name="Kimberley A.M."/>
            <person name="King A."/>
            <person name="Laird G.K."/>
            <person name="Langford C.F."/>
            <person name="Leversha M.A."/>
            <person name="Lloyd C."/>
            <person name="Lloyd D.M."/>
            <person name="Martyn I.D."/>
            <person name="Mashreghi-Mohammadi M."/>
            <person name="Matthews L.H."/>
            <person name="Mccann O.T."/>
            <person name="Mcclay J."/>
            <person name="Mclaren S."/>
            <person name="McMurray A.A."/>
            <person name="Milne S.A."/>
            <person name="Mortimore B.J."/>
            <person name="Odell C.N."/>
            <person name="Pavitt R."/>
            <person name="Pearce A.V."/>
            <person name="Pearson D."/>
            <person name="Phillimore B.J.C.T."/>
            <person name="Phillips S.H."/>
            <person name="Plumb R.W."/>
            <person name="Ramsay H."/>
            <person name="Ramsey Y."/>
            <person name="Rogers L."/>
            <person name="Ross M.T."/>
            <person name="Scott C.E."/>
            <person name="Sehra H.K."/>
            <person name="Skuce C.D."/>
            <person name="Smalley S."/>
            <person name="Smith M.L."/>
            <person name="Soderlund C."/>
            <person name="Spragon L."/>
            <person name="Steward C.A."/>
            <person name="Sulston J.E."/>
            <person name="Swann R.M."/>
            <person name="Vaudin M."/>
            <person name="Wall M."/>
            <person name="Wallis J.M."/>
            <person name="Whiteley M.N."/>
            <person name="Willey D.L."/>
            <person name="Williams L."/>
            <person name="Williams S.A."/>
            <person name="Williamson H."/>
            <person name="Wilmer T.E."/>
            <person name="Wilming L."/>
            <person name="Wright C.L."/>
            <person name="Hubbard T."/>
            <person name="Bentley D.R."/>
            <person name="Beck S."/>
            <person name="Rogers J."/>
            <person name="Shimizu N."/>
            <person name="Minoshima S."/>
            <person name="Kawasaki K."/>
            <person name="Sasaki T."/>
            <person name="Asakawa S."/>
            <person name="Kudoh J."/>
            <person name="Shintani A."/>
            <person name="Shibuya K."/>
            <person name="Yoshizaki Y."/>
            <person name="Aoki N."/>
            <person name="Mitsuyama S."/>
            <person name="Roe B.A."/>
            <person name="Chen F."/>
            <person name="Chu L."/>
            <person name="Crabtree J."/>
            <person name="Deschamps S."/>
            <person name="Do A."/>
            <person name="Do T."/>
            <person name="Dorman A."/>
            <person name="Fang F."/>
            <person name="Fu Y."/>
            <person name="Hu P."/>
            <person name="Hua A."/>
            <person name="Kenton S."/>
            <person name="Lai H."/>
            <person name="Lao H.I."/>
            <person name="Lewis J."/>
            <person name="Lewis S."/>
            <person name="Lin S.-P."/>
            <person name="Loh P."/>
            <person name="Malaj E."/>
            <person name="Nguyen T."/>
            <person name="Pan H."/>
            <person name="Phan S."/>
            <person name="Qi S."/>
            <person name="Qian Y."/>
            <person name="Ray L."/>
            <person name="Ren Q."/>
            <person name="Shaull S."/>
            <person name="Sloan D."/>
            <person name="Song L."/>
            <person name="Wang Q."/>
            <person name="Wang Y."/>
            <person name="Wang Z."/>
            <person name="White J."/>
            <person name="Willingham D."/>
            <person name="Wu H."/>
            <person name="Yao Z."/>
            <person name="Zhan M."/>
            <person name="Zhang G."/>
            <person name="Chissoe S."/>
            <person name="Murray J."/>
            <person name="Miller N."/>
            <person name="Minx P."/>
            <person name="Fulton R."/>
            <person name="Johnson D."/>
            <person name="Bemis G."/>
            <person name="Bentley D."/>
            <person name="Bradshaw H."/>
            <person name="Bourne S."/>
            <person name="Cordes M."/>
            <person name="Du Z."/>
            <person name="Fulton L."/>
            <person name="Goela D."/>
            <person name="Graves T."/>
            <person name="Hawkins J."/>
            <person name="Hinds K."/>
            <person name="Kemp K."/>
            <person name="Latreille P."/>
            <person name="Layman D."/>
            <person name="Ozersky P."/>
            <person name="Rohlfing T."/>
            <person name="Scheet P."/>
            <person name="Walker C."/>
            <person name="Wamsley A."/>
            <person name="Wohldmann P."/>
            <person name="Pepin K."/>
            <person name="Nelson J."/>
            <person name="Korf I."/>
            <person name="Bedell J.A."/>
            <person name="Hillier L.W."/>
            <person name="Mardis E."/>
            <person name="Waterston R."/>
            <person name="Wilson R."/>
            <person name="Emanuel B.S."/>
            <person name="Shaikh T."/>
            <person name="Kurahashi H."/>
            <person name="Saitta S."/>
            <person name="Budarf M.L."/>
            <person name="McDermid H.E."/>
            <person name="Johnson A."/>
            <person name="Wong A.C.C."/>
            <person name="Morrow B.E."/>
            <person name="Edelmann L."/>
            <person name="Kim U.J."/>
            <person name="Shizuya H."/>
            <person name="Simon M.I."/>
            <person name="Dumanski J.P."/>
            <person name="Peyrard M."/>
            <person name="Kedra D."/>
            <person name="Seroussi E."/>
            <person name="Fransson I."/>
            <person name="Tapia I."/>
            <person name="Bruder C.E."/>
            <person name="O'Brien K.P."/>
            <person name="Wilkinson P."/>
            <person name="Bodenteich A."/>
            <person name="Hartman K."/>
            <person name="Hu X."/>
            <person name="Khan A.S."/>
            <person name="Lane L."/>
            <person name="Tilahun Y."/>
            <person name="Wright H."/>
        </authorList>
    </citation>
    <scope>NUCLEOTIDE SEQUENCE [LARGE SCALE GENOMIC DNA]</scope>
</reference>
<reference key="4">
    <citation type="journal article" date="2004" name="Genome Res.">
        <title>The status, quality, and expansion of the NIH full-length cDNA project: the Mammalian Gene Collection (MGC).</title>
        <authorList>
            <consortium name="The MGC Project Team"/>
        </authorList>
    </citation>
    <scope>NUCLEOTIDE SEQUENCE [LARGE SCALE MRNA] OF 33-701 (ISOFORM 1)</scope>
    <source>
        <tissue>Pancreas</tissue>
    </source>
</reference>
<reference key="5">
    <citation type="journal article" date="2007" name="BMC Genomics">
        <title>The full-ORF clone resource of the German cDNA consortium.</title>
        <authorList>
            <person name="Bechtel S."/>
            <person name="Rosenfelder H."/>
            <person name="Duda A."/>
            <person name="Schmidt C.P."/>
            <person name="Ernst U."/>
            <person name="Wellenreuther R."/>
            <person name="Mehrle A."/>
            <person name="Schuster C."/>
            <person name="Bahr A."/>
            <person name="Bloecker H."/>
            <person name="Heubner D."/>
            <person name="Hoerlein A."/>
            <person name="Michel G."/>
            <person name="Wedler H."/>
            <person name="Koehrer K."/>
            <person name="Ottenwaelder B."/>
            <person name="Poustka A."/>
            <person name="Wiemann S."/>
            <person name="Schupp I."/>
        </authorList>
    </citation>
    <scope>NUCLEOTIDE SEQUENCE [LARGE SCALE MRNA] OF 360-701 (ISOFORM 1)</scope>
    <source>
        <tissue>Melanoma</tissue>
    </source>
</reference>
<reference key="6">
    <citation type="journal article" date="2008" name="J. Proteome Res.">
        <title>Phosphorylation analysis of primary human T lymphocytes using sequential IMAC and titanium oxide enrichment.</title>
        <authorList>
            <person name="Carrascal M."/>
            <person name="Ovelleiro D."/>
            <person name="Casas V."/>
            <person name="Gay M."/>
            <person name="Abian J."/>
        </authorList>
    </citation>
    <scope>PHOSPHORYLATION [LARGE SCALE ANALYSIS] AT SER-544</scope>
    <scope>IDENTIFICATION BY MASS SPECTROMETRY [LARGE SCALE ANALYSIS]</scope>
    <source>
        <tissue>T-cell</tissue>
    </source>
</reference>
<reference key="7">
    <citation type="journal article" date="2009" name="Sci. Signal.">
        <title>Quantitative phosphoproteomic analysis of T cell receptor signaling reveals system-wide modulation of protein-protein interactions.</title>
        <authorList>
            <person name="Mayya V."/>
            <person name="Lundgren D.H."/>
            <person name="Hwang S.-I."/>
            <person name="Rezaul K."/>
            <person name="Wu L."/>
            <person name="Eng J.K."/>
            <person name="Rodionov V."/>
            <person name="Han D.K."/>
        </authorList>
    </citation>
    <scope>PHOSPHORYLATION [LARGE SCALE ANALYSIS] AT SER-550</scope>
    <scope>IDENTIFICATION BY MASS SPECTROMETRY [LARGE SCALE ANALYSIS]</scope>
    <source>
        <tissue>Leukemic T-cell</tissue>
    </source>
</reference>
<reference key="8">
    <citation type="journal article" date="2011" name="BMC Syst. Biol.">
        <title>Initial characterization of the human central proteome.</title>
        <authorList>
            <person name="Burkard T.R."/>
            <person name="Planyavsky M."/>
            <person name="Kaupe I."/>
            <person name="Breitwieser F.P."/>
            <person name="Buerckstuemmer T."/>
            <person name="Bennett K.L."/>
            <person name="Superti-Furga G."/>
            <person name="Colinge J."/>
        </authorList>
    </citation>
    <scope>IDENTIFICATION BY MASS SPECTROMETRY [LARGE SCALE ANALYSIS]</scope>
</reference>
<reference key="9">
    <citation type="journal article" date="2011" name="Mol. Cell">
        <title>SH3BP1, an exocyst-associated RhoGAP, inactivates Rac1 at the front to drive cell motility.</title>
        <authorList>
            <person name="Parrini M.C."/>
            <person name="Sadou-Dubourgnoux A."/>
            <person name="Aoki K."/>
            <person name="Kunida K."/>
            <person name="Biondini M."/>
            <person name="Hatzoglou A."/>
            <person name="Poullet P."/>
            <person name="Formstecher E."/>
            <person name="Yeaman C."/>
            <person name="Matsuda M."/>
            <person name="Rosse C."/>
            <person name="Camonis J."/>
        </authorList>
    </citation>
    <scope>FUNCTION</scope>
    <scope>INTERACTION WITH EXOC4 AND EXOC8</scope>
    <scope>SUBCELLULAR LOCATION</scope>
    <scope>DOMAIN</scope>
    <scope>MUTAGENESIS OF ARG-312</scope>
</reference>
<reference key="10">
    <citation type="journal article" date="2011" name="Sci. Signal.">
        <title>System-wide temporal characterization of the proteome and phosphoproteome of human embryonic stem cell differentiation.</title>
        <authorList>
            <person name="Rigbolt K.T."/>
            <person name="Prokhorova T.A."/>
            <person name="Akimov V."/>
            <person name="Henningsen J."/>
            <person name="Johansen P.T."/>
            <person name="Kratchmarova I."/>
            <person name="Kassem M."/>
            <person name="Mann M."/>
            <person name="Olsen J.V."/>
            <person name="Blagoev B."/>
        </authorList>
    </citation>
    <scope>PHOSPHORYLATION [LARGE SCALE ANALYSIS] AT SER-550</scope>
    <scope>IDENTIFICATION BY MASS SPECTROMETRY [LARGE SCALE ANALYSIS]</scope>
</reference>
<reference key="11">
    <citation type="journal article" date="2012" name="J. Cell Biol.">
        <title>Epithelial junction formation requires confinement of Cdc42 activity by a novel SH3BP1 complex.</title>
        <authorList>
            <person name="Elbediwy A."/>
            <person name="Zihni C."/>
            <person name="Terry S.J."/>
            <person name="Clark P."/>
            <person name="Matter K."/>
            <person name="Balda M.S."/>
        </authorList>
    </citation>
    <scope>FUNCTION</scope>
    <scope>INTERACTION WITH AFDN; CAPZA1; CD2AP AND CGNL1</scope>
    <scope>SUBCELLULAR LOCATION</scope>
    <scope>REGION</scope>
</reference>
<reference key="12">
    <citation type="journal article" date="2013" name="J. Proteome Res.">
        <title>Toward a comprehensive characterization of a human cancer cell phosphoproteome.</title>
        <authorList>
            <person name="Zhou H."/>
            <person name="Di Palma S."/>
            <person name="Preisinger C."/>
            <person name="Peng M."/>
            <person name="Polat A.N."/>
            <person name="Heck A.J."/>
            <person name="Mohammed S."/>
        </authorList>
    </citation>
    <scope>PHOSPHORYLATION [LARGE SCALE ANALYSIS] AT SER-175; SER-262; SER-544; SER-550 AND THR-626</scope>
    <scope>IDENTIFICATION BY MASS SPECTROMETRY [LARGE SCALE ANALYSIS]</scope>
    <source>
        <tissue>Cervix carcinoma</tissue>
        <tissue>Erythroleukemia</tissue>
    </source>
</reference>
<reference key="13">
    <citation type="journal article" date="2013" name="Mol. Biol. Cell">
        <title>A novel Rac1 GAP splice variant relays poly-Ub accumulation signals to mediate Rac1 inactivation.</title>
        <authorList>
            <person name="Huang T.Y."/>
            <person name="Michael S."/>
            <person name="Xu T."/>
            <person name="Sarkeshik A."/>
            <person name="Moresco J.J."/>
            <person name="Yates J.R. III"/>
            <person name="Masliah E."/>
            <person name="Bokoch G.M."/>
            <person name="DerMardirossian C."/>
        </authorList>
    </citation>
    <scope>ALTERNATIVE SPLICING (ISOFORMS LONG BGIN AND SHORT BGIN)</scope>
</reference>
<reference key="14">
    <citation type="journal article" date="2014" name="J. Cell Biol.">
        <title>An image-based RNAi screen identifies SH3BP1 as a key effector of Semaphorin 3E-PlexinD1 signaling.</title>
        <authorList>
            <person name="Tata A."/>
            <person name="Stoppel D.C."/>
            <person name="Hong S."/>
            <person name="Ben-Zvi A."/>
            <person name="Xie T."/>
            <person name="Gu C."/>
        </authorList>
    </citation>
    <scope>FUNCTION</scope>
    <scope>INTERACTION WITH PLXND1</scope>
    <scope>SUBCELLULAR LOCATION</scope>
    <scope>DOMAIN</scope>
</reference>
<reference key="15">
    <citation type="journal article" date="2014" name="J. Proteomics">
        <title>An enzyme assisted RP-RPLC approach for in-depth analysis of human liver phosphoproteome.</title>
        <authorList>
            <person name="Bian Y."/>
            <person name="Song C."/>
            <person name="Cheng K."/>
            <person name="Dong M."/>
            <person name="Wang F."/>
            <person name="Huang J."/>
            <person name="Sun D."/>
            <person name="Wang L."/>
            <person name="Ye M."/>
            <person name="Zou H."/>
        </authorList>
    </citation>
    <scope>PHOSPHORYLATION [LARGE SCALE ANALYSIS] AT SER-262; SER-264 AND SER-544</scope>
    <scope>IDENTIFICATION BY MASS SPECTROMETRY [LARGE SCALE ANALYSIS]</scope>
    <source>
        <tissue>Liver</tissue>
    </source>
</reference>
<reference key="16">
    <citation type="journal article" date="2015" name="Nat. Commun.">
        <title>Phosphoinositide 3-kinase enables phagocytosis of large particles by terminating actin assembly through Rac/Cdc42 GTPase-activating proteins.</title>
        <authorList>
            <person name="Schlam D."/>
            <person name="Bagshaw R.D."/>
            <person name="Freeman S.A."/>
            <person name="Collins R.F."/>
            <person name="Pawson T."/>
            <person name="Fairn G.D."/>
            <person name="Grinstein S."/>
        </authorList>
    </citation>
    <scope>FUNCTION</scope>
    <scope>SUBCELLULAR LOCATION</scope>
</reference>
<gene>
    <name evidence="13" type="primary">SH3BP1</name>
</gene>
<keyword id="KW-0002">3D-structure</keyword>
<keyword id="KW-0024">Alternative initiation</keyword>
<keyword id="KW-0025">Alternative splicing</keyword>
<keyword id="KW-0965">Cell junction</keyword>
<keyword id="KW-0966">Cell projection</keyword>
<keyword id="KW-0963">Cytoplasm</keyword>
<keyword id="KW-0343">GTPase activation</keyword>
<keyword id="KW-0539">Nucleus</keyword>
<keyword id="KW-0581">Phagocytosis</keyword>
<keyword id="KW-0597">Phosphoprotein</keyword>
<keyword id="KW-1267">Proteomics identification</keyword>
<keyword id="KW-1185">Reference proteome</keyword>
<keyword id="KW-0729">SH3-binding</keyword>
<keyword id="KW-0796">Tight junction</keyword>
<sequence>MMKRQLHRMRQLAQTGSLGRTPETAEFLGEDLLQVEQRLEPAKRAAHNIHKRLQACLQGQSGADMDKRVKKLPLMALSTTMAESFKELDPDSSMGKALEMSCAIQNQLARILAEFEMTLERDVLQPLSRLSEEELPAILKHKKSLQKLVSDWNTLKSRLSQATKNSGSSQGLGGSPGSHSHTTMANKVETLKEEEEELKRKVEQCRDEYLADLYHFVTKEDSYANYFIRLLEIQADYHRRSLSSLDTALAELRENHGQADHSPSMTATHFPRVYGVSLATHLQELGREIALPIEACVMMLLSEGMKEEGLFRLAAGASVLKRLKQTMASDPHSLEEFCSDPHAVAGALKSYLRELPEPLMTFDLYDDWMRAASLKEPGARLQALQEVCSRLPPENLSNLRYLMKFLARLAEEQEVNKMTPSNIAIVLGPNLLWPPEKEGDQAQLDAASVSSIQVVGVVEALIQSADTLFPGDINFNVSGLFSAVTLQDTVSDRLASEELPSTAVPTPATTPAPAPAPAPAPAPALASAATKERTESEVPPRPASPKVTRSPPETAAPVEDMARRTKRPAPARPTMPPPQVSGSRSSPPAPPLPPGSGSPGTPQALPRRLVGSSLRAPTVPPPLPPTPPQPARRQSRRSPASPSPASPGPASPSPVSLSNPAQVDLGAATAEGGAPEAISGVPTPPAIPPQPRPRSLASETN</sequence>
<evidence type="ECO:0000250" key="1">
    <source>
        <dbReference type="UniProtKB" id="D3ZFJ3"/>
    </source>
</evidence>
<evidence type="ECO:0000250" key="2">
    <source>
        <dbReference type="UniProtKB" id="P55194"/>
    </source>
</evidence>
<evidence type="ECO:0000255" key="3">
    <source>
        <dbReference type="PROSITE-ProRule" id="PRU00172"/>
    </source>
</evidence>
<evidence type="ECO:0000255" key="4">
    <source>
        <dbReference type="PROSITE-ProRule" id="PRU00361"/>
    </source>
</evidence>
<evidence type="ECO:0000256" key="5">
    <source>
        <dbReference type="SAM" id="MobiDB-lite"/>
    </source>
</evidence>
<evidence type="ECO:0000269" key="6">
    <source>
    </source>
</evidence>
<evidence type="ECO:0000269" key="7">
    <source>
    </source>
</evidence>
<evidence type="ECO:0000269" key="8">
    <source>
    </source>
</evidence>
<evidence type="ECO:0000269" key="9">
    <source>
    </source>
</evidence>
<evidence type="ECO:0000303" key="10">
    <source>
    </source>
</evidence>
<evidence type="ECO:0000303" key="11">
    <source>
    </source>
</evidence>
<evidence type="ECO:0000305" key="12"/>
<evidence type="ECO:0000312" key="13">
    <source>
        <dbReference type="HGNC" id="HGNC:10824"/>
    </source>
</evidence>
<evidence type="ECO:0007744" key="14">
    <source>
    </source>
</evidence>
<evidence type="ECO:0007744" key="15">
    <source>
    </source>
</evidence>
<evidence type="ECO:0007744" key="16">
    <source>
    </source>
</evidence>
<evidence type="ECO:0007744" key="17">
    <source>
    </source>
</evidence>
<evidence type="ECO:0007744" key="18">
    <source>
    </source>
</evidence>
<feature type="chain" id="PRO_0000056723" description="SH3 domain-binding protein 1">
    <location>
        <begin position="1"/>
        <end position="701"/>
    </location>
</feature>
<feature type="domain" description="BAR" evidence="4">
    <location>
        <begin position="17"/>
        <end position="262"/>
    </location>
</feature>
<feature type="domain" description="Rho-GAP" evidence="3">
    <location>
        <begin position="276"/>
        <end position="469"/>
    </location>
</feature>
<feature type="region of interest" description="Interaction with CGNL1" evidence="7">
    <location>
        <begin position="1"/>
        <end position="275"/>
    </location>
</feature>
<feature type="region of interest" description="Disordered" evidence="5">
    <location>
        <begin position="1"/>
        <end position="23"/>
    </location>
</feature>
<feature type="region of interest" description="Disordered" evidence="5">
    <location>
        <begin position="160"/>
        <end position="182"/>
    </location>
</feature>
<feature type="region of interest" description="Interaction with CD2AP" evidence="7">
    <location>
        <begin position="470"/>
        <end position="701"/>
    </location>
</feature>
<feature type="region of interest" description="Disordered" evidence="5">
    <location>
        <begin position="496"/>
        <end position="701"/>
    </location>
</feature>
<feature type="short sequence motif" description="SH3-binding" evidence="2">
    <location>
        <begin position="616"/>
        <end position="625"/>
    </location>
</feature>
<feature type="compositionally biased region" description="Basic residues" evidence="5">
    <location>
        <begin position="1"/>
        <end position="10"/>
    </location>
</feature>
<feature type="compositionally biased region" description="Pro residues" evidence="5">
    <location>
        <begin position="508"/>
        <end position="522"/>
    </location>
</feature>
<feature type="compositionally biased region" description="Pro residues" evidence="5">
    <location>
        <begin position="570"/>
        <end position="579"/>
    </location>
</feature>
<feature type="compositionally biased region" description="Pro residues" evidence="5">
    <location>
        <begin position="587"/>
        <end position="596"/>
    </location>
</feature>
<feature type="compositionally biased region" description="Pro residues" evidence="5">
    <location>
        <begin position="618"/>
        <end position="630"/>
    </location>
</feature>
<feature type="compositionally biased region" description="Pro residues" evidence="5">
    <location>
        <begin position="641"/>
        <end position="652"/>
    </location>
</feature>
<feature type="compositionally biased region" description="Low complexity" evidence="5">
    <location>
        <begin position="666"/>
        <end position="677"/>
    </location>
</feature>
<feature type="compositionally biased region" description="Pro residues" evidence="5">
    <location>
        <begin position="682"/>
        <end position="692"/>
    </location>
</feature>
<feature type="site" description="Arginine finger; crucial for GTP hydrolysis by stabilizing the transition state" evidence="3">
    <location>
        <position position="312"/>
    </location>
</feature>
<feature type="modified residue" description="Phosphoserine" evidence="17">
    <location>
        <position position="175"/>
    </location>
</feature>
<feature type="modified residue" description="Phosphoserine" evidence="1">
    <location>
        <position position="241"/>
    </location>
</feature>
<feature type="modified residue" description="Phosphoserine" evidence="17 18">
    <location>
        <position position="262"/>
    </location>
</feature>
<feature type="modified residue" description="Phosphoserine" evidence="18">
    <location>
        <position position="264"/>
    </location>
</feature>
<feature type="modified residue" description="Phosphoserine" evidence="14 17 18">
    <location>
        <position position="544"/>
    </location>
</feature>
<feature type="modified residue" description="Phosphoserine" evidence="15 16 17">
    <location>
        <position position="550"/>
    </location>
</feature>
<feature type="modified residue" description="Phosphothreonine" evidence="2">
    <location>
        <position position="601"/>
    </location>
</feature>
<feature type="modified residue" description="Phosphothreonine" evidence="17">
    <location>
        <position position="626"/>
    </location>
</feature>
<feature type="modified residue" description="Phosphoserine" evidence="2">
    <location>
        <position position="653"/>
    </location>
</feature>
<feature type="splice variant" id="VSP_011373" description="In isoform 2." evidence="10">
    <original>DQAQLDAASVSSI</original>
    <variation>TEPARELGSQTLC</variation>
    <location>
        <begin position="440"/>
        <end position="452"/>
    </location>
</feature>
<feature type="splice variant" id="VSP_011374" description="In isoform 2." evidence="10">
    <location>
        <begin position="453"/>
        <end position="701"/>
    </location>
</feature>
<feature type="sequence variant" id="VAR_033450" description="In dbSNP:rs929038.">
    <original>P</original>
    <variation>L</variation>
    <location>
        <position position="511"/>
    </location>
</feature>
<feature type="sequence variant" id="VAR_033451" description="In dbSNP:rs2269548.">
    <original>S</original>
    <variation>F</variation>
    <location>
        <position position="656"/>
    </location>
</feature>
<feature type="mutagenesis site" description="Probable loss of the GTPase activator activity. Loss of function in cell migration." evidence="6">
    <original>R</original>
    <variation>A</variation>
    <location>
        <position position="312"/>
    </location>
</feature>